<protein>
    <recommendedName>
        <fullName evidence="1">Serine--tRNA ligase</fullName>
        <ecNumber evidence="1">6.1.1.11</ecNumber>
    </recommendedName>
    <alternativeName>
        <fullName evidence="1">Seryl-tRNA synthetase</fullName>
        <shortName evidence="1">SerRS</shortName>
    </alternativeName>
    <alternativeName>
        <fullName evidence="1">Seryl-tRNA(Ser/Sec) synthetase</fullName>
    </alternativeName>
</protein>
<keyword id="KW-0030">Aminoacyl-tRNA synthetase</keyword>
<keyword id="KW-0067">ATP-binding</keyword>
<keyword id="KW-0963">Cytoplasm</keyword>
<keyword id="KW-0436">Ligase</keyword>
<keyword id="KW-0547">Nucleotide-binding</keyword>
<keyword id="KW-0648">Protein biosynthesis</keyword>
<organism>
    <name type="scientific">Bacillus cereus (strain ATCC 10987 / NRS 248)</name>
    <dbReference type="NCBI Taxonomy" id="222523"/>
    <lineage>
        <taxon>Bacteria</taxon>
        <taxon>Bacillati</taxon>
        <taxon>Bacillota</taxon>
        <taxon>Bacilli</taxon>
        <taxon>Bacillales</taxon>
        <taxon>Bacillaceae</taxon>
        <taxon>Bacillus</taxon>
        <taxon>Bacillus cereus group</taxon>
    </lineage>
</organism>
<gene>
    <name evidence="1" type="primary">serS</name>
    <name type="ordered locus">BCE_0013</name>
</gene>
<comment type="function">
    <text evidence="1">Catalyzes the attachment of serine to tRNA(Ser). Is also able to aminoacylate tRNA(Sec) with serine, to form the misacylated tRNA L-seryl-tRNA(Sec), which will be further converted into selenocysteinyl-tRNA(Sec).</text>
</comment>
<comment type="catalytic activity">
    <reaction evidence="1">
        <text>tRNA(Ser) + L-serine + ATP = L-seryl-tRNA(Ser) + AMP + diphosphate + H(+)</text>
        <dbReference type="Rhea" id="RHEA:12292"/>
        <dbReference type="Rhea" id="RHEA-COMP:9669"/>
        <dbReference type="Rhea" id="RHEA-COMP:9703"/>
        <dbReference type="ChEBI" id="CHEBI:15378"/>
        <dbReference type="ChEBI" id="CHEBI:30616"/>
        <dbReference type="ChEBI" id="CHEBI:33019"/>
        <dbReference type="ChEBI" id="CHEBI:33384"/>
        <dbReference type="ChEBI" id="CHEBI:78442"/>
        <dbReference type="ChEBI" id="CHEBI:78533"/>
        <dbReference type="ChEBI" id="CHEBI:456215"/>
        <dbReference type="EC" id="6.1.1.11"/>
    </reaction>
</comment>
<comment type="catalytic activity">
    <reaction evidence="1">
        <text>tRNA(Sec) + L-serine + ATP = L-seryl-tRNA(Sec) + AMP + diphosphate + H(+)</text>
        <dbReference type="Rhea" id="RHEA:42580"/>
        <dbReference type="Rhea" id="RHEA-COMP:9742"/>
        <dbReference type="Rhea" id="RHEA-COMP:10128"/>
        <dbReference type="ChEBI" id="CHEBI:15378"/>
        <dbReference type="ChEBI" id="CHEBI:30616"/>
        <dbReference type="ChEBI" id="CHEBI:33019"/>
        <dbReference type="ChEBI" id="CHEBI:33384"/>
        <dbReference type="ChEBI" id="CHEBI:78442"/>
        <dbReference type="ChEBI" id="CHEBI:78533"/>
        <dbReference type="ChEBI" id="CHEBI:456215"/>
        <dbReference type="EC" id="6.1.1.11"/>
    </reaction>
</comment>
<comment type="pathway">
    <text evidence="1">Aminoacyl-tRNA biosynthesis; selenocysteinyl-tRNA(Sec) biosynthesis; L-seryl-tRNA(Sec) from L-serine and tRNA(Sec): step 1/1.</text>
</comment>
<comment type="subunit">
    <text evidence="1">Homodimer. The tRNA molecule binds across the dimer.</text>
</comment>
<comment type="subcellular location">
    <subcellularLocation>
        <location evidence="1">Cytoplasm</location>
    </subcellularLocation>
</comment>
<comment type="domain">
    <text evidence="1">Consists of two distinct domains, a catalytic core and a N-terminal extension that is involved in tRNA binding.</text>
</comment>
<comment type="similarity">
    <text evidence="1">Belongs to the class-II aminoacyl-tRNA synthetase family. Type-1 seryl-tRNA synthetase subfamily.</text>
</comment>
<reference key="1">
    <citation type="journal article" date="2004" name="Nucleic Acids Res.">
        <title>The genome sequence of Bacillus cereus ATCC 10987 reveals metabolic adaptations and a large plasmid related to Bacillus anthracis pXO1.</title>
        <authorList>
            <person name="Rasko D.A."/>
            <person name="Ravel J."/>
            <person name="Oekstad O.A."/>
            <person name="Helgason E."/>
            <person name="Cer R.Z."/>
            <person name="Jiang L."/>
            <person name="Shores K.A."/>
            <person name="Fouts D.E."/>
            <person name="Tourasse N.J."/>
            <person name="Angiuoli S.V."/>
            <person name="Kolonay J.F."/>
            <person name="Nelson W.C."/>
            <person name="Kolstoe A.-B."/>
            <person name="Fraser C.M."/>
            <person name="Read T.D."/>
        </authorList>
    </citation>
    <scope>NUCLEOTIDE SEQUENCE [LARGE SCALE GENOMIC DNA]</scope>
    <source>
        <strain>ATCC 10987 / NRS 248</strain>
    </source>
</reference>
<dbReference type="EC" id="6.1.1.11" evidence="1"/>
<dbReference type="EMBL" id="AE017194">
    <property type="protein sequence ID" value="AAS38949.1"/>
    <property type="molecule type" value="Genomic_DNA"/>
</dbReference>
<dbReference type="KEGG" id="bca:BCE_0013"/>
<dbReference type="HOGENOM" id="CLU_023797_1_1_9"/>
<dbReference type="UniPathway" id="UPA00906">
    <property type="reaction ID" value="UER00895"/>
</dbReference>
<dbReference type="Proteomes" id="UP000002527">
    <property type="component" value="Chromosome"/>
</dbReference>
<dbReference type="GO" id="GO:0005737">
    <property type="term" value="C:cytoplasm"/>
    <property type="evidence" value="ECO:0007669"/>
    <property type="project" value="UniProtKB-SubCell"/>
</dbReference>
<dbReference type="GO" id="GO:0005524">
    <property type="term" value="F:ATP binding"/>
    <property type="evidence" value="ECO:0007669"/>
    <property type="project" value="UniProtKB-UniRule"/>
</dbReference>
<dbReference type="GO" id="GO:0140096">
    <property type="term" value="F:catalytic activity, acting on a protein"/>
    <property type="evidence" value="ECO:0007669"/>
    <property type="project" value="UniProtKB-ARBA"/>
</dbReference>
<dbReference type="GO" id="GO:0004828">
    <property type="term" value="F:serine-tRNA ligase activity"/>
    <property type="evidence" value="ECO:0007669"/>
    <property type="project" value="UniProtKB-UniRule"/>
</dbReference>
<dbReference type="GO" id="GO:0016740">
    <property type="term" value="F:transferase activity"/>
    <property type="evidence" value="ECO:0007669"/>
    <property type="project" value="UniProtKB-ARBA"/>
</dbReference>
<dbReference type="GO" id="GO:0016260">
    <property type="term" value="P:selenocysteine biosynthetic process"/>
    <property type="evidence" value="ECO:0007669"/>
    <property type="project" value="UniProtKB-UniRule"/>
</dbReference>
<dbReference type="GO" id="GO:0006434">
    <property type="term" value="P:seryl-tRNA aminoacylation"/>
    <property type="evidence" value="ECO:0007669"/>
    <property type="project" value="UniProtKB-UniRule"/>
</dbReference>
<dbReference type="CDD" id="cd00770">
    <property type="entry name" value="SerRS_core"/>
    <property type="match status" value="1"/>
</dbReference>
<dbReference type="Gene3D" id="3.30.930.10">
    <property type="entry name" value="Bira Bifunctional Protein, Domain 2"/>
    <property type="match status" value="1"/>
</dbReference>
<dbReference type="Gene3D" id="1.10.287.40">
    <property type="entry name" value="Serine-tRNA synthetase, tRNA binding domain"/>
    <property type="match status" value="1"/>
</dbReference>
<dbReference type="HAMAP" id="MF_00176">
    <property type="entry name" value="Ser_tRNA_synth_type1"/>
    <property type="match status" value="1"/>
</dbReference>
<dbReference type="InterPro" id="IPR002314">
    <property type="entry name" value="aa-tRNA-synt_IIb"/>
</dbReference>
<dbReference type="InterPro" id="IPR006195">
    <property type="entry name" value="aa-tRNA-synth_II"/>
</dbReference>
<dbReference type="InterPro" id="IPR045864">
    <property type="entry name" value="aa-tRNA-synth_II/BPL/LPL"/>
</dbReference>
<dbReference type="InterPro" id="IPR002317">
    <property type="entry name" value="Ser-tRNA-ligase_type_1"/>
</dbReference>
<dbReference type="InterPro" id="IPR015866">
    <property type="entry name" value="Ser-tRNA-synth_1_N"/>
</dbReference>
<dbReference type="InterPro" id="IPR042103">
    <property type="entry name" value="SerRS_1_N_sf"/>
</dbReference>
<dbReference type="InterPro" id="IPR033729">
    <property type="entry name" value="SerRS_core"/>
</dbReference>
<dbReference type="InterPro" id="IPR010978">
    <property type="entry name" value="tRNA-bd_arm"/>
</dbReference>
<dbReference type="NCBIfam" id="TIGR00414">
    <property type="entry name" value="serS"/>
    <property type="match status" value="1"/>
</dbReference>
<dbReference type="PANTHER" id="PTHR43697:SF1">
    <property type="entry name" value="SERINE--TRNA LIGASE"/>
    <property type="match status" value="1"/>
</dbReference>
<dbReference type="PANTHER" id="PTHR43697">
    <property type="entry name" value="SERYL-TRNA SYNTHETASE"/>
    <property type="match status" value="1"/>
</dbReference>
<dbReference type="Pfam" id="PF02403">
    <property type="entry name" value="Seryl_tRNA_N"/>
    <property type="match status" value="1"/>
</dbReference>
<dbReference type="Pfam" id="PF00587">
    <property type="entry name" value="tRNA-synt_2b"/>
    <property type="match status" value="1"/>
</dbReference>
<dbReference type="PIRSF" id="PIRSF001529">
    <property type="entry name" value="Ser-tRNA-synth_IIa"/>
    <property type="match status" value="1"/>
</dbReference>
<dbReference type="PRINTS" id="PR00981">
    <property type="entry name" value="TRNASYNTHSER"/>
</dbReference>
<dbReference type="SUPFAM" id="SSF55681">
    <property type="entry name" value="Class II aaRS and biotin synthetases"/>
    <property type="match status" value="1"/>
</dbReference>
<dbReference type="SUPFAM" id="SSF46589">
    <property type="entry name" value="tRNA-binding arm"/>
    <property type="match status" value="1"/>
</dbReference>
<dbReference type="PROSITE" id="PS50862">
    <property type="entry name" value="AA_TRNA_LIGASE_II"/>
    <property type="match status" value="1"/>
</dbReference>
<proteinExistence type="inferred from homology"/>
<sequence>MLDIKFLRTNFEEVKAKLQHRGEDLTDFGRFEELDTRRRELLVQTEELKSKRNEVSQQISVLKREKKDAESLILEMREVGEKVKDLDNELRTVEEDLERLMLSIPNIPHESAPVGETEDDNVVARTWGEVKEFAFEPKPHWDLATDLGILDFERAGKVTGSRFVFYKGAGARLERALISFMLDLHTDEHGYEEVLPPYMVNRASMTGTGQLPKFEEDAFRIESEDYFLIPTAEVPVTNMHRDEILNKEQLPIRYAAFSSCFRSEAGSAGRDTRGLIRQHQFNKVELVKFVKPEDSYEELEKLXNDAERVLQLLELPYRVMSMCTGDLGFTAAKKYDIEVWIPSYGTYREISSCSNFEAFQARRANIRFRREPNGKPEHVHTLNGSGLAIGRTVAAILENYQQEDGTIIIPEVLRPYMGGKTVIK</sequence>
<name>SYS_BACC1</name>
<feature type="chain" id="PRO_0000121998" description="Serine--tRNA ligase">
    <location>
        <begin position="1"/>
        <end position="424"/>
    </location>
</feature>
<feature type="binding site" evidence="1">
    <location>
        <begin position="231"/>
        <end position="233"/>
    </location>
    <ligand>
        <name>L-serine</name>
        <dbReference type="ChEBI" id="CHEBI:33384"/>
    </ligand>
</feature>
<feature type="binding site" evidence="1">
    <location>
        <begin position="262"/>
        <end position="264"/>
    </location>
    <ligand>
        <name>ATP</name>
        <dbReference type="ChEBI" id="CHEBI:30616"/>
    </ligand>
</feature>
<feature type="binding site" evidence="1">
    <location>
        <position position="285"/>
    </location>
    <ligand>
        <name>L-serine</name>
        <dbReference type="ChEBI" id="CHEBI:33384"/>
    </ligand>
</feature>
<feature type="binding site" evidence="1">
    <location>
        <begin position="349"/>
        <end position="352"/>
    </location>
    <ligand>
        <name>ATP</name>
        <dbReference type="ChEBI" id="CHEBI:30616"/>
    </ligand>
</feature>
<feature type="binding site" evidence="1">
    <location>
        <position position="385"/>
    </location>
    <ligand>
        <name>L-serine</name>
        <dbReference type="ChEBI" id="CHEBI:33384"/>
    </ligand>
</feature>
<accession>Q73FJ3</accession>
<evidence type="ECO:0000255" key="1">
    <source>
        <dbReference type="HAMAP-Rule" id="MF_00176"/>
    </source>
</evidence>